<reference key="1">
    <citation type="journal article" date="2005" name="Jpn. Agric. Res. Q.">
        <title>Genome sequence of Xanthomonas oryzae pv. oryzae suggests contribution of large numbers of effector genes and insertion sequences to its race diversity.</title>
        <authorList>
            <person name="Ochiai H."/>
            <person name="Inoue Y."/>
            <person name="Takeya M."/>
            <person name="Sasaki A."/>
            <person name="Kaku H."/>
        </authorList>
    </citation>
    <scope>NUCLEOTIDE SEQUENCE [LARGE SCALE GENOMIC DNA]</scope>
    <source>
        <strain>MAFF 311018</strain>
    </source>
</reference>
<comment type="similarity">
    <text evidence="1">Belongs to the bacterial ribosomal protein bL35 family.</text>
</comment>
<organism>
    <name type="scientific">Xanthomonas oryzae pv. oryzae (strain MAFF 311018)</name>
    <dbReference type="NCBI Taxonomy" id="342109"/>
    <lineage>
        <taxon>Bacteria</taxon>
        <taxon>Pseudomonadati</taxon>
        <taxon>Pseudomonadota</taxon>
        <taxon>Gammaproteobacteria</taxon>
        <taxon>Lysobacterales</taxon>
        <taxon>Lysobacteraceae</taxon>
        <taxon>Xanthomonas</taxon>
    </lineage>
</organism>
<gene>
    <name evidence="1" type="primary">rpmI</name>
    <name type="ordered locus">XOO3025</name>
</gene>
<keyword id="KW-0687">Ribonucleoprotein</keyword>
<keyword id="KW-0689">Ribosomal protein</keyword>
<protein>
    <recommendedName>
        <fullName evidence="1">Large ribosomal subunit protein bL35</fullName>
    </recommendedName>
    <alternativeName>
        <fullName evidence="2">50S ribosomal protein L35</fullName>
    </alternativeName>
</protein>
<evidence type="ECO:0000255" key="1">
    <source>
        <dbReference type="HAMAP-Rule" id="MF_00514"/>
    </source>
</evidence>
<evidence type="ECO:0000305" key="2"/>
<sequence length="65" mass="7561">MPKIKTNRAAAKRFRKTASGKYKCGHANRSHILTKKATKRKRNLRQTNHVRAEDAGRLDRMLPYL</sequence>
<name>RL35_XANOM</name>
<feature type="chain" id="PRO_0000258786" description="Large ribosomal subunit protein bL35">
    <location>
        <begin position="1"/>
        <end position="65"/>
    </location>
</feature>
<accession>Q2P0Z7</accession>
<proteinExistence type="inferred from homology"/>
<dbReference type="EMBL" id="AP008229">
    <property type="protein sequence ID" value="BAE69780.1"/>
    <property type="molecule type" value="Genomic_DNA"/>
</dbReference>
<dbReference type="RefSeq" id="WP_002811096.1">
    <property type="nucleotide sequence ID" value="NC_007705.1"/>
</dbReference>
<dbReference type="SMR" id="Q2P0Z7"/>
<dbReference type="GeneID" id="98193709"/>
<dbReference type="KEGG" id="xom:XOO3025"/>
<dbReference type="HOGENOM" id="CLU_169643_4_3_6"/>
<dbReference type="GO" id="GO:0022625">
    <property type="term" value="C:cytosolic large ribosomal subunit"/>
    <property type="evidence" value="ECO:0007669"/>
    <property type="project" value="TreeGrafter"/>
</dbReference>
<dbReference type="GO" id="GO:0003735">
    <property type="term" value="F:structural constituent of ribosome"/>
    <property type="evidence" value="ECO:0007669"/>
    <property type="project" value="InterPro"/>
</dbReference>
<dbReference type="GO" id="GO:0006412">
    <property type="term" value="P:translation"/>
    <property type="evidence" value="ECO:0007669"/>
    <property type="project" value="UniProtKB-UniRule"/>
</dbReference>
<dbReference type="FunFam" id="4.10.410.60:FF:000001">
    <property type="entry name" value="50S ribosomal protein L35"/>
    <property type="match status" value="1"/>
</dbReference>
<dbReference type="Gene3D" id="4.10.410.60">
    <property type="match status" value="1"/>
</dbReference>
<dbReference type="HAMAP" id="MF_00514">
    <property type="entry name" value="Ribosomal_bL35"/>
    <property type="match status" value="1"/>
</dbReference>
<dbReference type="InterPro" id="IPR001706">
    <property type="entry name" value="Ribosomal_bL35"/>
</dbReference>
<dbReference type="InterPro" id="IPR021137">
    <property type="entry name" value="Ribosomal_bL35-like"/>
</dbReference>
<dbReference type="InterPro" id="IPR018265">
    <property type="entry name" value="Ribosomal_bL35_CS"/>
</dbReference>
<dbReference type="InterPro" id="IPR037229">
    <property type="entry name" value="Ribosomal_bL35_sf"/>
</dbReference>
<dbReference type="NCBIfam" id="TIGR00001">
    <property type="entry name" value="rpmI_bact"/>
    <property type="match status" value="1"/>
</dbReference>
<dbReference type="PANTHER" id="PTHR33343">
    <property type="entry name" value="54S RIBOSOMAL PROTEIN BL35M"/>
    <property type="match status" value="1"/>
</dbReference>
<dbReference type="PANTHER" id="PTHR33343:SF1">
    <property type="entry name" value="LARGE RIBOSOMAL SUBUNIT PROTEIN BL35M"/>
    <property type="match status" value="1"/>
</dbReference>
<dbReference type="Pfam" id="PF01632">
    <property type="entry name" value="Ribosomal_L35p"/>
    <property type="match status" value="1"/>
</dbReference>
<dbReference type="PRINTS" id="PR00064">
    <property type="entry name" value="RIBOSOMALL35"/>
</dbReference>
<dbReference type="SUPFAM" id="SSF143034">
    <property type="entry name" value="L35p-like"/>
    <property type="match status" value="1"/>
</dbReference>
<dbReference type="PROSITE" id="PS00936">
    <property type="entry name" value="RIBOSOMAL_L35"/>
    <property type="match status" value="1"/>
</dbReference>